<accession>B2HLJ8</accession>
<dbReference type="EC" id="2.6.1.57" evidence="1"/>
<dbReference type="EMBL" id="CP000854">
    <property type="protein sequence ID" value="ACC43730.1"/>
    <property type="molecule type" value="Genomic_DNA"/>
</dbReference>
<dbReference type="RefSeq" id="WP_012396831.1">
    <property type="nucleotide sequence ID" value="NC_010612.1"/>
</dbReference>
<dbReference type="SMR" id="B2HLJ8"/>
<dbReference type="STRING" id="216594.MMAR_5326"/>
<dbReference type="KEGG" id="mmi:MMAR_5326"/>
<dbReference type="eggNOG" id="COG0079">
    <property type="taxonomic scope" value="Bacteria"/>
</dbReference>
<dbReference type="HOGENOM" id="CLU_017584_3_3_11"/>
<dbReference type="OrthoDB" id="9809616at2"/>
<dbReference type="Proteomes" id="UP000001190">
    <property type="component" value="Chromosome"/>
</dbReference>
<dbReference type="GO" id="GO:0008793">
    <property type="term" value="F:aromatic-amino-acid transaminase activity"/>
    <property type="evidence" value="ECO:0007669"/>
    <property type="project" value="UniProtKB-UniRule"/>
</dbReference>
<dbReference type="GO" id="GO:0004400">
    <property type="term" value="F:histidinol-phosphate transaminase activity"/>
    <property type="evidence" value="ECO:0007669"/>
    <property type="project" value="InterPro"/>
</dbReference>
<dbReference type="GO" id="GO:0030170">
    <property type="term" value="F:pyridoxal phosphate binding"/>
    <property type="evidence" value="ECO:0007669"/>
    <property type="project" value="UniProtKB-UniRule"/>
</dbReference>
<dbReference type="GO" id="GO:0000105">
    <property type="term" value="P:L-histidine biosynthetic process"/>
    <property type="evidence" value="ECO:0007669"/>
    <property type="project" value="InterPro"/>
</dbReference>
<dbReference type="CDD" id="cd00609">
    <property type="entry name" value="AAT_like"/>
    <property type="match status" value="1"/>
</dbReference>
<dbReference type="Gene3D" id="3.90.1150.10">
    <property type="entry name" value="Aspartate Aminotransferase, domain 1"/>
    <property type="match status" value="1"/>
</dbReference>
<dbReference type="Gene3D" id="3.40.640.10">
    <property type="entry name" value="Type I PLP-dependent aspartate aminotransferase-like (Major domain)"/>
    <property type="match status" value="1"/>
</dbReference>
<dbReference type="HAMAP" id="MF_01023">
    <property type="entry name" value="HisC_aminotrans_2"/>
    <property type="match status" value="1"/>
</dbReference>
<dbReference type="HAMAP" id="MF_01513">
    <property type="entry name" value="Phe_aminotrans_2"/>
    <property type="match status" value="1"/>
</dbReference>
<dbReference type="InterPro" id="IPR001917">
    <property type="entry name" value="Aminotrans_II_pyridoxalP_BS"/>
</dbReference>
<dbReference type="InterPro" id="IPR004839">
    <property type="entry name" value="Aminotransferase_I/II_large"/>
</dbReference>
<dbReference type="InterPro" id="IPR024892">
    <property type="entry name" value="ArAT"/>
</dbReference>
<dbReference type="InterPro" id="IPR005861">
    <property type="entry name" value="HisP_aminotrans"/>
</dbReference>
<dbReference type="InterPro" id="IPR050106">
    <property type="entry name" value="HistidinolP_aminotransfase"/>
</dbReference>
<dbReference type="InterPro" id="IPR015424">
    <property type="entry name" value="PyrdxlP-dep_Trfase"/>
</dbReference>
<dbReference type="InterPro" id="IPR015421">
    <property type="entry name" value="PyrdxlP-dep_Trfase_major"/>
</dbReference>
<dbReference type="InterPro" id="IPR015422">
    <property type="entry name" value="PyrdxlP-dep_Trfase_small"/>
</dbReference>
<dbReference type="NCBIfam" id="NF002878">
    <property type="entry name" value="PRK03321.1"/>
    <property type="match status" value="1"/>
</dbReference>
<dbReference type="PANTHER" id="PTHR43643:SF3">
    <property type="entry name" value="HISTIDINOL-PHOSPHATE AMINOTRANSFERASE"/>
    <property type="match status" value="1"/>
</dbReference>
<dbReference type="PANTHER" id="PTHR43643">
    <property type="entry name" value="HISTIDINOL-PHOSPHATE AMINOTRANSFERASE 2"/>
    <property type="match status" value="1"/>
</dbReference>
<dbReference type="Pfam" id="PF00155">
    <property type="entry name" value="Aminotran_1_2"/>
    <property type="match status" value="1"/>
</dbReference>
<dbReference type="SUPFAM" id="SSF53383">
    <property type="entry name" value="PLP-dependent transferases"/>
    <property type="match status" value="1"/>
</dbReference>
<dbReference type="PROSITE" id="PS00599">
    <property type="entry name" value="AA_TRANSFER_CLASS_2"/>
    <property type="match status" value="1"/>
</dbReference>
<organism>
    <name type="scientific">Mycobacterium marinum (strain ATCC BAA-535 / M)</name>
    <dbReference type="NCBI Taxonomy" id="216594"/>
    <lineage>
        <taxon>Bacteria</taxon>
        <taxon>Bacillati</taxon>
        <taxon>Actinomycetota</taxon>
        <taxon>Actinomycetes</taxon>
        <taxon>Mycobacteriales</taxon>
        <taxon>Mycobacteriaceae</taxon>
        <taxon>Mycobacterium</taxon>
        <taxon>Mycobacterium ulcerans group</taxon>
    </lineage>
</organism>
<proteinExistence type="inferred from homology"/>
<protein>
    <recommendedName>
        <fullName evidence="1">Aromatic amino acid aminotransferase</fullName>
        <shortName evidence="1">ArAT</shortName>
        <ecNumber evidence="1">2.6.1.57</ecNumber>
    </recommendedName>
</protein>
<keyword id="KW-0032">Aminotransferase</keyword>
<keyword id="KW-0663">Pyridoxal phosphate</keyword>
<keyword id="KW-1185">Reference proteome</keyword>
<keyword id="KW-0808">Transferase</keyword>
<evidence type="ECO:0000255" key="1">
    <source>
        <dbReference type="HAMAP-Rule" id="MF_01513"/>
    </source>
</evidence>
<comment type="function">
    <text evidence="1">Aminotransferase that catalyzes the conversion of aromatic amino acids and 2-oxoglutarate into corresponding aromatic oxo acids and L-glutamate.</text>
</comment>
<comment type="catalytic activity">
    <reaction evidence="1">
        <text>an aromatic L-alpha-amino acid + 2-oxoglutarate = an aromatic oxo-acid + L-glutamate</text>
        <dbReference type="Rhea" id="RHEA:17533"/>
        <dbReference type="ChEBI" id="CHEBI:16810"/>
        <dbReference type="ChEBI" id="CHEBI:29985"/>
        <dbReference type="ChEBI" id="CHEBI:73309"/>
        <dbReference type="ChEBI" id="CHEBI:84824"/>
        <dbReference type="EC" id="2.6.1.57"/>
    </reaction>
</comment>
<comment type="cofactor">
    <cofactor evidence="1">
        <name>pyridoxal 5'-phosphate</name>
        <dbReference type="ChEBI" id="CHEBI:597326"/>
    </cofactor>
</comment>
<comment type="subunit">
    <text evidence="1">Homodimer.</text>
</comment>
<comment type="similarity">
    <text evidence="1">Belongs to the class-II pyridoxal-phosphate-dependent aminotransferase family.</text>
</comment>
<feature type="chain" id="PRO_1000146151" description="Aromatic amino acid aminotransferase">
    <location>
        <begin position="1"/>
        <end position="361"/>
    </location>
</feature>
<feature type="modified residue" description="N6-(pyridoxal phosphate)lysine" evidence="1">
    <location>
        <position position="221"/>
    </location>
</feature>
<name>PATR_MYCMM</name>
<sequence length="361" mass="38523">MTARLRPVLAGLPVYVPGKTVPGAIKLASNETVFGPLPSVRAAIEHATQSINRYPDNGCLAVKAALARHVSSLSAADFGPEHIAVGCGSVSLCQQLVQITASVGDEVIFGWRSFELYPPQVQVAGATAIQVPLTNHTFDLEAMLAAVTERTRLIIVCNPNNPTSTVVQPEALAEFVRSVPPHILVAIDEAYVEYLRDGTVPDSPHLVRTHSNVVVLRTFSKAYGLAGLRVGYAVGQPDVIAALDKVYVPFTVSSLAQAAAIASVQAADELLARTDAVVAERGRVSAELRAAGFTVPPSQANFVWLPLEDRTTDFVTQAAKAHIVVRPYGADGVRVTIAAPEENDALLRFARCWITHRDGAR</sequence>
<reference key="1">
    <citation type="journal article" date="2008" name="Genome Res.">
        <title>Insights from the complete genome sequence of Mycobacterium marinum on the evolution of Mycobacterium tuberculosis.</title>
        <authorList>
            <person name="Stinear T.P."/>
            <person name="Seemann T."/>
            <person name="Harrison P.F."/>
            <person name="Jenkin G.A."/>
            <person name="Davies J.K."/>
            <person name="Johnson P.D."/>
            <person name="Abdellah Z."/>
            <person name="Arrowsmith C."/>
            <person name="Chillingworth T."/>
            <person name="Churcher C."/>
            <person name="Clarke K."/>
            <person name="Cronin A."/>
            <person name="Davis P."/>
            <person name="Goodhead I."/>
            <person name="Holroyd N."/>
            <person name="Jagels K."/>
            <person name="Lord A."/>
            <person name="Moule S."/>
            <person name="Mungall K."/>
            <person name="Norbertczak H."/>
            <person name="Quail M.A."/>
            <person name="Rabbinowitsch E."/>
            <person name="Walker D."/>
            <person name="White B."/>
            <person name="Whitehead S."/>
            <person name="Small P.L."/>
            <person name="Brosch R."/>
            <person name="Ramakrishnan L."/>
            <person name="Fischbach M.A."/>
            <person name="Parkhill J."/>
            <person name="Cole S.T."/>
        </authorList>
    </citation>
    <scope>NUCLEOTIDE SEQUENCE [LARGE SCALE GENOMIC DNA]</scope>
    <source>
        <strain>ATCC BAA-535 / M</strain>
    </source>
</reference>
<gene>
    <name evidence="1" type="primary">pat</name>
    <name type="ordered locus">MMAR_5326</name>
</gene>